<accession>Q6GB23</accession>
<name>GCSH_STAAS</name>
<gene>
    <name evidence="1" type="primary">gcvH</name>
    <name type="ordered locus">SAS0773</name>
</gene>
<feature type="chain" id="PRO_0000166250" description="Glycine cleavage system H protein">
    <location>
        <begin position="1"/>
        <end position="126"/>
    </location>
</feature>
<feature type="domain" description="Lipoyl-binding" evidence="2">
    <location>
        <begin position="22"/>
        <end position="104"/>
    </location>
</feature>
<feature type="modified residue" description="N6-lipoyllysine" evidence="1">
    <location>
        <position position="63"/>
    </location>
</feature>
<dbReference type="EMBL" id="BX571857">
    <property type="protein sequence ID" value="CAG42548.1"/>
    <property type="molecule type" value="Genomic_DNA"/>
</dbReference>
<dbReference type="RefSeq" id="WP_000290489.1">
    <property type="nucleotide sequence ID" value="NC_002953.3"/>
</dbReference>
<dbReference type="SMR" id="Q6GB23"/>
<dbReference type="KEGG" id="sas:SAS0773"/>
<dbReference type="HOGENOM" id="CLU_097408_2_0_9"/>
<dbReference type="GO" id="GO:0005829">
    <property type="term" value="C:cytosol"/>
    <property type="evidence" value="ECO:0007669"/>
    <property type="project" value="TreeGrafter"/>
</dbReference>
<dbReference type="GO" id="GO:0005960">
    <property type="term" value="C:glycine cleavage complex"/>
    <property type="evidence" value="ECO:0007669"/>
    <property type="project" value="InterPro"/>
</dbReference>
<dbReference type="GO" id="GO:0019464">
    <property type="term" value="P:glycine decarboxylation via glycine cleavage system"/>
    <property type="evidence" value="ECO:0007669"/>
    <property type="project" value="UniProtKB-UniRule"/>
</dbReference>
<dbReference type="CDD" id="cd06848">
    <property type="entry name" value="GCS_H"/>
    <property type="match status" value="1"/>
</dbReference>
<dbReference type="Gene3D" id="2.40.50.100">
    <property type="match status" value="1"/>
</dbReference>
<dbReference type="HAMAP" id="MF_00272">
    <property type="entry name" value="GcvH"/>
    <property type="match status" value="1"/>
</dbReference>
<dbReference type="InterPro" id="IPR003016">
    <property type="entry name" value="2-oxoA_DH_lipoyl-BS"/>
</dbReference>
<dbReference type="InterPro" id="IPR000089">
    <property type="entry name" value="Biotin_lipoyl"/>
</dbReference>
<dbReference type="InterPro" id="IPR002930">
    <property type="entry name" value="GCV_H"/>
</dbReference>
<dbReference type="InterPro" id="IPR033753">
    <property type="entry name" value="GCV_H/Fam206"/>
</dbReference>
<dbReference type="InterPro" id="IPR017453">
    <property type="entry name" value="GCV_H_sub"/>
</dbReference>
<dbReference type="InterPro" id="IPR011053">
    <property type="entry name" value="Single_hybrid_motif"/>
</dbReference>
<dbReference type="NCBIfam" id="TIGR00527">
    <property type="entry name" value="gcvH"/>
    <property type="match status" value="1"/>
</dbReference>
<dbReference type="NCBIfam" id="NF002270">
    <property type="entry name" value="PRK01202.1"/>
    <property type="match status" value="1"/>
</dbReference>
<dbReference type="PANTHER" id="PTHR11715">
    <property type="entry name" value="GLYCINE CLEAVAGE SYSTEM H PROTEIN"/>
    <property type="match status" value="1"/>
</dbReference>
<dbReference type="PANTHER" id="PTHR11715:SF3">
    <property type="entry name" value="GLYCINE CLEAVAGE SYSTEM H PROTEIN-RELATED"/>
    <property type="match status" value="1"/>
</dbReference>
<dbReference type="Pfam" id="PF01597">
    <property type="entry name" value="GCV_H"/>
    <property type="match status" value="1"/>
</dbReference>
<dbReference type="SUPFAM" id="SSF51230">
    <property type="entry name" value="Single hybrid motif"/>
    <property type="match status" value="1"/>
</dbReference>
<dbReference type="PROSITE" id="PS50968">
    <property type="entry name" value="BIOTINYL_LIPOYL"/>
    <property type="match status" value="1"/>
</dbReference>
<dbReference type="PROSITE" id="PS00189">
    <property type="entry name" value="LIPOYL"/>
    <property type="match status" value="1"/>
</dbReference>
<protein>
    <recommendedName>
        <fullName evidence="1">Glycine cleavage system H protein</fullName>
    </recommendedName>
    <alternativeName>
        <fullName evidence="1">Octanoyl/lipoyl carrier protein</fullName>
    </alternativeName>
</protein>
<comment type="function">
    <text evidence="1">The glycine cleavage system catalyzes the degradation of glycine. The H protein shuttles the methylamine group of glycine from the P protein to the T protein.</text>
</comment>
<comment type="function">
    <text evidence="1">Is also involved in protein lipoylation via its role as an octanoyl/lipoyl carrier protein intermediate.</text>
</comment>
<comment type="cofactor">
    <cofactor evidence="1">
        <name>(R)-lipoate</name>
        <dbReference type="ChEBI" id="CHEBI:83088"/>
    </cofactor>
    <text evidence="1">Binds 1 lipoyl cofactor covalently.</text>
</comment>
<comment type="subunit">
    <text evidence="1">The glycine cleavage system is composed of four proteins: P, T, L and H.</text>
</comment>
<comment type="similarity">
    <text evidence="1">Belongs to the GcvH family.</text>
</comment>
<sequence>MAVPNELKYSKEHEWVKVEGNVATIGITEYAQSELGDIVFVELPETDDEINEGDTFGSVESVKTVSELYAPISGKVVEVNEELEDSPEFVNESPYEKAWMVKVEISDESQIEALLTAEKYSEMIGE</sequence>
<proteinExistence type="inferred from homology"/>
<organism>
    <name type="scientific">Staphylococcus aureus (strain MSSA476)</name>
    <dbReference type="NCBI Taxonomy" id="282459"/>
    <lineage>
        <taxon>Bacteria</taxon>
        <taxon>Bacillati</taxon>
        <taxon>Bacillota</taxon>
        <taxon>Bacilli</taxon>
        <taxon>Bacillales</taxon>
        <taxon>Staphylococcaceae</taxon>
        <taxon>Staphylococcus</taxon>
    </lineage>
</organism>
<reference key="1">
    <citation type="journal article" date="2004" name="Proc. Natl. Acad. Sci. U.S.A.">
        <title>Complete genomes of two clinical Staphylococcus aureus strains: evidence for the rapid evolution of virulence and drug resistance.</title>
        <authorList>
            <person name="Holden M.T.G."/>
            <person name="Feil E.J."/>
            <person name="Lindsay J.A."/>
            <person name="Peacock S.J."/>
            <person name="Day N.P.J."/>
            <person name="Enright M.C."/>
            <person name="Foster T.J."/>
            <person name="Moore C.E."/>
            <person name="Hurst L."/>
            <person name="Atkin R."/>
            <person name="Barron A."/>
            <person name="Bason N."/>
            <person name="Bentley S.D."/>
            <person name="Chillingworth C."/>
            <person name="Chillingworth T."/>
            <person name="Churcher C."/>
            <person name="Clark L."/>
            <person name="Corton C."/>
            <person name="Cronin A."/>
            <person name="Doggett J."/>
            <person name="Dowd L."/>
            <person name="Feltwell T."/>
            <person name="Hance Z."/>
            <person name="Harris B."/>
            <person name="Hauser H."/>
            <person name="Holroyd S."/>
            <person name="Jagels K."/>
            <person name="James K.D."/>
            <person name="Lennard N."/>
            <person name="Line A."/>
            <person name="Mayes R."/>
            <person name="Moule S."/>
            <person name="Mungall K."/>
            <person name="Ormond D."/>
            <person name="Quail M.A."/>
            <person name="Rabbinowitsch E."/>
            <person name="Rutherford K.M."/>
            <person name="Sanders M."/>
            <person name="Sharp S."/>
            <person name="Simmonds M."/>
            <person name="Stevens K."/>
            <person name="Whitehead S."/>
            <person name="Barrell B.G."/>
            <person name="Spratt B.G."/>
            <person name="Parkhill J."/>
        </authorList>
    </citation>
    <scope>NUCLEOTIDE SEQUENCE [LARGE SCALE GENOMIC DNA]</scope>
    <source>
        <strain>MSSA476</strain>
    </source>
</reference>
<keyword id="KW-0450">Lipoyl</keyword>
<evidence type="ECO:0000255" key="1">
    <source>
        <dbReference type="HAMAP-Rule" id="MF_00272"/>
    </source>
</evidence>
<evidence type="ECO:0000255" key="2">
    <source>
        <dbReference type="PROSITE-ProRule" id="PRU01066"/>
    </source>
</evidence>